<protein>
    <recommendedName>
        <fullName evidence="1">NADH-quinone oxidoreductase subunit C/D</fullName>
        <ecNumber evidence="1">7.1.1.-</ecNumber>
    </recommendedName>
    <alternativeName>
        <fullName evidence="1">NADH dehydrogenase I subunit C/D</fullName>
    </alternativeName>
    <alternativeName>
        <fullName evidence="1">NDH-1 subunit C/D</fullName>
    </alternativeName>
</protein>
<organism>
    <name type="scientific">Serratia proteamaculans (strain 568)</name>
    <dbReference type="NCBI Taxonomy" id="399741"/>
    <lineage>
        <taxon>Bacteria</taxon>
        <taxon>Pseudomonadati</taxon>
        <taxon>Pseudomonadota</taxon>
        <taxon>Gammaproteobacteria</taxon>
        <taxon>Enterobacterales</taxon>
        <taxon>Yersiniaceae</taxon>
        <taxon>Serratia</taxon>
    </lineage>
</organism>
<reference key="1">
    <citation type="submission" date="2007-09" db="EMBL/GenBank/DDBJ databases">
        <title>Complete sequence of chromosome of Serratia proteamaculans 568.</title>
        <authorList>
            <consortium name="US DOE Joint Genome Institute"/>
            <person name="Copeland A."/>
            <person name="Lucas S."/>
            <person name="Lapidus A."/>
            <person name="Barry K."/>
            <person name="Glavina del Rio T."/>
            <person name="Dalin E."/>
            <person name="Tice H."/>
            <person name="Pitluck S."/>
            <person name="Chain P."/>
            <person name="Malfatti S."/>
            <person name="Shin M."/>
            <person name="Vergez L."/>
            <person name="Schmutz J."/>
            <person name="Larimer F."/>
            <person name="Land M."/>
            <person name="Hauser L."/>
            <person name="Kyrpides N."/>
            <person name="Kim E."/>
            <person name="Taghavi S."/>
            <person name="Newman L."/>
            <person name="Vangronsveld J."/>
            <person name="van der Lelie D."/>
            <person name="Richardson P."/>
        </authorList>
    </citation>
    <scope>NUCLEOTIDE SEQUENCE [LARGE SCALE GENOMIC DNA]</scope>
    <source>
        <strain>568</strain>
    </source>
</reference>
<proteinExistence type="inferred from homology"/>
<name>NUOCD_SERP5</name>
<feature type="chain" id="PRO_0000358692" description="NADH-quinone oxidoreductase subunit C/D">
    <location>
        <begin position="1"/>
        <end position="598"/>
    </location>
</feature>
<feature type="region of interest" description="NADH dehydrogenase I subunit C" evidence="1">
    <location>
        <begin position="1"/>
        <end position="188"/>
    </location>
</feature>
<feature type="region of interest" description="NADH dehydrogenase I subunit D" evidence="1">
    <location>
        <begin position="212"/>
        <end position="598"/>
    </location>
</feature>
<comment type="function">
    <text evidence="1">NDH-1 shuttles electrons from NADH, via FMN and iron-sulfur (Fe-S) centers, to quinones in the respiratory chain. The immediate electron acceptor for the enzyme in this species is believed to be ubiquinone. Couples the redox reaction to proton translocation (for every two electrons transferred, four hydrogen ions are translocated across the cytoplasmic membrane), and thus conserves the redox energy in a proton gradient.</text>
</comment>
<comment type="catalytic activity">
    <reaction evidence="1">
        <text>a quinone + NADH + 5 H(+)(in) = a quinol + NAD(+) + 4 H(+)(out)</text>
        <dbReference type="Rhea" id="RHEA:57888"/>
        <dbReference type="ChEBI" id="CHEBI:15378"/>
        <dbReference type="ChEBI" id="CHEBI:24646"/>
        <dbReference type="ChEBI" id="CHEBI:57540"/>
        <dbReference type="ChEBI" id="CHEBI:57945"/>
        <dbReference type="ChEBI" id="CHEBI:132124"/>
    </reaction>
</comment>
<comment type="subunit">
    <text evidence="1">NDH-1 is composed of 13 different subunits. Subunits NuoB, CD, E, F, and G constitute the peripheral sector of the complex.</text>
</comment>
<comment type="subcellular location">
    <subcellularLocation>
        <location evidence="1">Cell inner membrane</location>
        <topology evidence="1">Peripheral membrane protein</topology>
        <orientation evidence="1">Cytoplasmic side</orientation>
    </subcellularLocation>
</comment>
<comment type="similarity">
    <text evidence="1">In the N-terminal section; belongs to the complex I 30 kDa subunit family.</text>
</comment>
<comment type="similarity">
    <text evidence="1">In the C-terminal section; belongs to the complex I 49 kDa subunit family.</text>
</comment>
<evidence type="ECO:0000255" key="1">
    <source>
        <dbReference type="HAMAP-Rule" id="MF_01359"/>
    </source>
</evidence>
<accession>A8GH14</accession>
<dbReference type="EC" id="7.1.1.-" evidence="1"/>
<dbReference type="EMBL" id="CP000826">
    <property type="protein sequence ID" value="ABV42404.1"/>
    <property type="molecule type" value="Genomic_DNA"/>
</dbReference>
<dbReference type="SMR" id="A8GH14"/>
<dbReference type="STRING" id="399741.Spro_3306"/>
<dbReference type="KEGG" id="spe:Spro_3306"/>
<dbReference type="eggNOG" id="COG0649">
    <property type="taxonomic scope" value="Bacteria"/>
</dbReference>
<dbReference type="eggNOG" id="COG0852">
    <property type="taxonomic scope" value="Bacteria"/>
</dbReference>
<dbReference type="HOGENOM" id="CLU_015134_3_2_6"/>
<dbReference type="OrthoDB" id="9801496at2"/>
<dbReference type="GO" id="GO:0030964">
    <property type="term" value="C:NADH dehydrogenase complex"/>
    <property type="evidence" value="ECO:0007669"/>
    <property type="project" value="InterPro"/>
</dbReference>
<dbReference type="GO" id="GO:0005886">
    <property type="term" value="C:plasma membrane"/>
    <property type="evidence" value="ECO:0007669"/>
    <property type="project" value="UniProtKB-SubCell"/>
</dbReference>
<dbReference type="GO" id="GO:0051287">
    <property type="term" value="F:NAD binding"/>
    <property type="evidence" value="ECO:0007669"/>
    <property type="project" value="InterPro"/>
</dbReference>
<dbReference type="GO" id="GO:0008137">
    <property type="term" value="F:NADH dehydrogenase (ubiquinone) activity"/>
    <property type="evidence" value="ECO:0007669"/>
    <property type="project" value="InterPro"/>
</dbReference>
<dbReference type="GO" id="GO:0050136">
    <property type="term" value="F:NADH:ubiquinone reductase (non-electrogenic) activity"/>
    <property type="evidence" value="ECO:0007669"/>
    <property type="project" value="UniProtKB-UniRule"/>
</dbReference>
<dbReference type="GO" id="GO:0048038">
    <property type="term" value="F:quinone binding"/>
    <property type="evidence" value="ECO:0007669"/>
    <property type="project" value="UniProtKB-KW"/>
</dbReference>
<dbReference type="FunFam" id="1.10.645.10:FF:000001">
    <property type="entry name" value="NADH-quinone oxidoreductase subunit C/D"/>
    <property type="match status" value="1"/>
</dbReference>
<dbReference type="FunFam" id="3.30.460.80:FF:000001">
    <property type="entry name" value="NADH-quinone oxidoreductase subunit C/D"/>
    <property type="match status" value="1"/>
</dbReference>
<dbReference type="Gene3D" id="1.10.645.10">
    <property type="entry name" value="Cytochrome-c3 Hydrogenase, chain B"/>
    <property type="match status" value="1"/>
</dbReference>
<dbReference type="Gene3D" id="3.30.460.80">
    <property type="entry name" value="NADH:ubiquinone oxidoreductase, 30kDa subunit"/>
    <property type="match status" value="1"/>
</dbReference>
<dbReference type="HAMAP" id="MF_01357">
    <property type="entry name" value="NDH1_NuoC"/>
    <property type="match status" value="1"/>
</dbReference>
<dbReference type="HAMAP" id="MF_01359">
    <property type="entry name" value="NDH1_NuoCD_1"/>
    <property type="match status" value="1"/>
</dbReference>
<dbReference type="HAMAP" id="MF_01358">
    <property type="entry name" value="NDH1_NuoD"/>
    <property type="match status" value="1"/>
</dbReference>
<dbReference type="InterPro" id="IPR010218">
    <property type="entry name" value="NADH_DH_suC"/>
</dbReference>
<dbReference type="InterPro" id="IPR023062">
    <property type="entry name" value="NADH_DH_suCD"/>
</dbReference>
<dbReference type="InterPro" id="IPR001135">
    <property type="entry name" value="NADH_Q_OxRdtase_suD"/>
</dbReference>
<dbReference type="InterPro" id="IPR037232">
    <property type="entry name" value="NADH_quin_OxRdtase_su_C/D-like"/>
</dbReference>
<dbReference type="InterPro" id="IPR001268">
    <property type="entry name" value="NADH_UbQ_OxRdtase_30kDa_su"/>
</dbReference>
<dbReference type="InterPro" id="IPR014029">
    <property type="entry name" value="NADH_UbQ_OxRdtase_49kDa_CS"/>
</dbReference>
<dbReference type="InterPro" id="IPR022885">
    <property type="entry name" value="NDH1_su_D/H"/>
</dbReference>
<dbReference type="InterPro" id="IPR029014">
    <property type="entry name" value="NiFe-Hase_large"/>
</dbReference>
<dbReference type="NCBIfam" id="TIGR01961">
    <property type="entry name" value="NuoC_fam"/>
    <property type="match status" value="1"/>
</dbReference>
<dbReference type="NCBIfam" id="TIGR01962">
    <property type="entry name" value="NuoD"/>
    <property type="match status" value="1"/>
</dbReference>
<dbReference type="NCBIfam" id="NF004739">
    <property type="entry name" value="PRK06075.1"/>
    <property type="match status" value="1"/>
</dbReference>
<dbReference type="NCBIfam" id="NF008728">
    <property type="entry name" value="PRK11742.1"/>
    <property type="match status" value="1"/>
</dbReference>
<dbReference type="PANTHER" id="PTHR11993:SF45">
    <property type="entry name" value="NADH-QUINONE OXIDOREDUCTASE SUBUNIT C_D"/>
    <property type="match status" value="1"/>
</dbReference>
<dbReference type="PANTHER" id="PTHR11993">
    <property type="entry name" value="NADH-UBIQUINONE OXIDOREDUCTASE 49 KDA SUBUNIT"/>
    <property type="match status" value="1"/>
</dbReference>
<dbReference type="Pfam" id="PF00329">
    <property type="entry name" value="Complex1_30kDa"/>
    <property type="match status" value="1"/>
</dbReference>
<dbReference type="Pfam" id="PF00346">
    <property type="entry name" value="Complex1_49kDa"/>
    <property type="match status" value="1"/>
</dbReference>
<dbReference type="SUPFAM" id="SSF56762">
    <property type="entry name" value="HydB/Nqo4-like"/>
    <property type="match status" value="1"/>
</dbReference>
<dbReference type="SUPFAM" id="SSF143243">
    <property type="entry name" value="Nqo5-like"/>
    <property type="match status" value="1"/>
</dbReference>
<dbReference type="PROSITE" id="PS00535">
    <property type="entry name" value="COMPLEX1_49K"/>
    <property type="match status" value="1"/>
</dbReference>
<gene>
    <name evidence="1" type="primary">nuoC</name>
    <name evidence="1" type="synonym">nuoCD</name>
    <name evidence="1" type="synonym">nuoD</name>
    <name type="ordered locus">Spro_3306</name>
</gene>
<sequence>MTDSTTHDALPAWQTRDHLDDPVIGELRNRFGPEAFTVQPTRTGMPVVWVKPDQLLEVMTFLRKQPKPYVMLFDLHGVDERLRTHRDGLPAADFSVFYHLISIERNRDIMLKVALSEKDLHVPTATKVFPNANWYERETWEMFGITFDGHPHLSRIMMPQTWEGHPLRKDYPARATEFDPFVLTKQKEDLEMEALTFKPEDWGMKRGTENEDFMFLNLGPNHPSAHGAFRIILQLDGEEIVDCVPDIGYHHRGAEKMGERQSWHSYIPYTDRIEYLGGCVNEMPYVLAVEKLAGIKVPDRVDTIRVMLSELFRINSHLLYISTFIQDVGAMTPVFFAFTDRQKIYDLVEAITGFRMHPAWFRIGGVAHDLPRGWDRLLREFLEWMPKRLDSYVKAALKNSILKGRSVGVASYNAKEALEWGVTGAGLRATGIEFDVRKWRPYSGYENFDFEVPVGDGNSDCYTRVMLKVEELRQSLRILEQCLNNMPEGPFKADHPLTTPPPKERTLQHIETLITHFLQVSWGPVMPANESFQMIEATKGINSYYLTSDGSTMSYRTRVRTPSFAHLQQIPAVIRGSLVSDLIVYLGSIDFVMSDVDR</sequence>
<keyword id="KW-0997">Cell inner membrane</keyword>
<keyword id="KW-1003">Cell membrane</keyword>
<keyword id="KW-0472">Membrane</keyword>
<keyword id="KW-0511">Multifunctional enzyme</keyword>
<keyword id="KW-0520">NAD</keyword>
<keyword id="KW-0874">Quinone</keyword>
<keyword id="KW-1278">Translocase</keyword>
<keyword id="KW-0813">Transport</keyword>
<keyword id="KW-0830">Ubiquinone</keyword>